<dbReference type="EMBL" id="AAAB01008807">
    <property type="protein sequence ID" value="EAA04761.3"/>
    <property type="molecule type" value="Genomic_DNA"/>
</dbReference>
<dbReference type="EMBL" id="AAAB01008807">
    <property type="protein sequence ID" value="EDO64537.1"/>
    <property type="molecule type" value="Genomic_DNA"/>
</dbReference>
<dbReference type="SMR" id="Q7QJM5"/>
<dbReference type="FunCoup" id="Q7QJM5">
    <property type="interactions" value="1499"/>
</dbReference>
<dbReference type="STRING" id="7165.Q7QJM5"/>
<dbReference type="PaxDb" id="7165-AGAP007580-PA"/>
<dbReference type="EnsemblMetazoa" id="AGAP007580-RA">
    <property type="protein sequence ID" value="AGAP007580-PA"/>
    <property type="gene ID" value="AGAP007580"/>
</dbReference>
<dbReference type="EnsemblMetazoa" id="AGAP007580-RB">
    <property type="protein sequence ID" value="AGAP007580-PB"/>
    <property type="gene ID" value="AGAP007580"/>
</dbReference>
<dbReference type="GeneID" id="1269649"/>
<dbReference type="KEGG" id="aga:1269649"/>
<dbReference type="CTD" id="6141"/>
<dbReference type="VEuPathDB" id="VectorBase:AGAMI1_010197"/>
<dbReference type="VEuPathDB" id="VectorBase:AGAP007580"/>
<dbReference type="eggNOG" id="KOG1714">
    <property type="taxonomic scope" value="Eukaryota"/>
</dbReference>
<dbReference type="HOGENOM" id="CLU_080024_0_0_1"/>
<dbReference type="InParanoid" id="Q7QJM5"/>
<dbReference type="OMA" id="IDICHKN"/>
<dbReference type="PhylomeDB" id="Q7QJM5"/>
<dbReference type="Proteomes" id="UP000007062">
    <property type="component" value="Chromosome 2L"/>
</dbReference>
<dbReference type="GO" id="GO:0022625">
    <property type="term" value="C:cytosolic large ribosomal subunit"/>
    <property type="evidence" value="ECO:0000318"/>
    <property type="project" value="GO_Central"/>
</dbReference>
<dbReference type="GO" id="GO:0003723">
    <property type="term" value="F:RNA binding"/>
    <property type="evidence" value="ECO:0000318"/>
    <property type="project" value="GO_Central"/>
</dbReference>
<dbReference type="GO" id="GO:0003735">
    <property type="term" value="F:structural constituent of ribosome"/>
    <property type="evidence" value="ECO:0000318"/>
    <property type="project" value="GO_Central"/>
</dbReference>
<dbReference type="GO" id="GO:0006412">
    <property type="term" value="P:translation"/>
    <property type="evidence" value="ECO:0007669"/>
    <property type="project" value="InterPro"/>
</dbReference>
<dbReference type="FunFam" id="3.100.10.10:FF:000001">
    <property type="entry name" value="60S ribosomal protein L18"/>
    <property type="match status" value="1"/>
</dbReference>
<dbReference type="Gene3D" id="3.100.10.10">
    <property type="match status" value="1"/>
</dbReference>
<dbReference type="InterPro" id="IPR000039">
    <property type="entry name" value="Ribosomal_eL18"/>
</dbReference>
<dbReference type="InterPro" id="IPR021132">
    <property type="entry name" value="Ribosomal_eL18/eL18-A/B/_CS"/>
</dbReference>
<dbReference type="InterPro" id="IPR021131">
    <property type="entry name" value="Ribosomal_uL15/eL18"/>
</dbReference>
<dbReference type="InterPro" id="IPR036227">
    <property type="entry name" value="Ribosomal_uL15/eL18_sf"/>
</dbReference>
<dbReference type="PANTHER" id="PTHR10934">
    <property type="entry name" value="60S RIBOSOMAL PROTEIN L18"/>
    <property type="match status" value="1"/>
</dbReference>
<dbReference type="PANTHER" id="PTHR10934:SF2">
    <property type="entry name" value="LARGE RIBOSOMAL SUBUNIT PROTEIN EL18"/>
    <property type="match status" value="1"/>
</dbReference>
<dbReference type="Pfam" id="PF17135">
    <property type="entry name" value="Ribosomal_L18"/>
    <property type="match status" value="1"/>
</dbReference>
<dbReference type="SUPFAM" id="SSF52080">
    <property type="entry name" value="Ribosomal proteins L15p and L18e"/>
    <property type="match status" value="1"/>
</dbReference>
<dbReference type="PROSITE" id="PS01106">
    <property type="entry name" value="RIBOSOMAL_L18E"/>
    <property type="match status" value="1"/>
</dbReference>
<reference key="1">
    <citation type="journal article" date="2002" name="Science">
        <title>The genome sequence of the malaria mosquito Anopheles gambiae.</title>
        <authorList>
            <person name="Holt R.A."/>
            <person name="Subramanian G.M."/>
            <person name="Halpern A."/>
            <person name="Sutton G.G."/>
            <person name="Charlab R."/>
            <person name="Nusskern D.R."/>
            <person name="Wincker P."/>
            <person name="Clark A.G."/>
            <person name="Ribeiro J.M.C."/>
            <person name="Wides R."/>
            <person name="Salzberg S.L."/>
            <person name="Loftus B.J."/>
            <person name="Yandell M.D."/>
            <person name="Majoros W.H."/>
            <person name="Rusch D.B."/>
            <person name="Lai Z."/>
            <person name="Kraft C.L."/>
            <person name="Abril J.F."/>
            <person name="Anthouard V."/>
            <person name="Arensburger P."/>
            <person name="Atkinson P.W."/>
            <person name="Baden H."/>
            <person name="de Berardinis V."/>
            <person name="Baldwin D."/>
            <person name="Benes V."/>
            <person name="Biedler J."/>
            <person name="Blass C."/>
            <person name="Bolanos R."/>
            <person name="Boscus D."/>
            <person name="Barnstead M."/>
            <person name="Cai S."/>
            <person name="Center A."/>
            <person name="Chaturverdi K."/>
            <person name="Christophides G.K."/>
            <person name="Chrystal M.A.M."/>
            <person name="Clamp M."/>
            <person name="Cravchik A."/>
            <person name="Curwen V."/>
            <person name="Dana A."/>
            <person name="Delcher A."/>
            <person name="Dew I."/>
            <person name="Evans C.A."/>
            <person name="Flanigan M."/>
            <person name="Grundschober-Freimoser A."/>
            <person name="Friedli L."/>
            <person name="Gu Z."/>
            <person name="Guan P."/>
            <person name="Guigo R."/>
            <person name="Hillenmeyer M.E."/>
            <person name="Hladun S.L."/>
            <person name="Hogan J.R."/>
            <person name="Hong Y.S."/>
            <person name="Hoover J."/>
            <person name="Jaillon O."/>
            <person name="Ke Z."/>
            <person name="Kodira C.D."/>
            <person name="Kokoza E."/>
            <person name="Koutsos A."/>
            <person name="Letunic I."/>
            <person name="Levitsky A.A."/>
            <person name="Liang Y."/>
            <person name="Lin J.-J."/>
            <person name="Lobo N.F."/>
            <person name="Lopez J.R."/>
            <person name="Malek J.A."/>
            <person name="McIntosh T.C."/>
            <person name="Meister S."/>
            <person name="Miller J.R."/>
            <person name="Mobarry C."/>
            <person name="Mongin E."/>
            <person name="Murphy S.D."/>
            <person name="O'Brochta D.A."/>
            <person name="Pfannkoch C."/>
            <person name="Qi R."/>
            <person name="Regier M.A."/>
            <person name="Remington K."/>
            <person name="Shao H."/>
            <person name="Sharakhova M.V."/>
            <person name="Sitter C.D."/>
            <person name="Shetty J."/>
            <person name="Smith T.J."/>
            <person name="Strong R."/>
            <person name="Sun J."/>
            <person name="Thomasova D."/>
            <person name="Ton L.Q."/>
            <person name="Topalis P."/>
            <person name="Tu Z.J."/>
            <person name="Unger M.F."/>
            <person name="Walenz B."/>
            <person name="Wang A.H."/>
            <person name="Wang J."/>
            <person name="Wang M."/>
            <person name="Wang X."/>
            <person name="Woodford K.J."/>
            <person name="Wortman J.R."/>
            <person name="Wu M."/>
            <person name="Yao A."/>
            <person name="Zdobnov E.M."/>
            <person name="Zhang H."/>
            <person name="Zhao Q."/>
            <person name="Zhao S."/>
            <person name="Zhu S.C."/>
            <person name="Zhimulev I."/>
            <person name="Coluzzi M."/>
            <person name="della Torre A."/>
            <person name="Roth C.W."/>
            <person name="Louis C."/>
            <person name="Kalush F."/>
            <person name="Mural R.J."/>
            <person name="Myers E.W."/>
            <person name="Adams M.D."/>
            <person name="Smith H.O."/>
            <person name="Broder S."/>
            <person name="Gardner M.J."/>
            <person name="Fraser C.M."/>
            <person name="Birney E."/>
            <person name="Bork P."/>
            <person name="Brey P.T."/>
            <person name="Venter J.C."/>
            <person name="Weissenbach J."/>
            <person name="Kafatos F.C."/>
            <person name="Collins F.H."/>
            <person name="Hoffman S.L."/>
        </authorList>
    </citation>
    <scope>NUCLEOTIDE SEQUENCE [LARGE SCALE GENOMIC DNA]</scope>
    <source>
        <strain>PEST</strain>
    </source>
</reference>
<accession>Q7QJM5</accession>
<accession>A7UR95</accession>
<gene>
    <name type="primary">RpL18</name>
    <name type="ORF">AGAP007580</name>
</gene>
<keyword id="KW-0963">Cytoplasm</keyword>
<keyword id="KW-1185">Reference proteome</keyword>
<keyword id="KW-0687">Ribonucleoprotein</keyword>
<keyword id="KW-0689">Ribosomal protein</keyword>
<proteinExistence type="inferred from homology"/>
<feature type="chain" id="PRO_0000291651" description="Large ribosomal subunit protein eL18">
    <location>
        <begin position="1"/>
        <end position="189"/>
    </location>
</feature>
<protein>
    <recommendedName>
        <fullName evidence="2">Large ribosomal subunit protein eL18</fullName>
    </recommendedName>
    <alternativeName>
        <fullName>60S ribosomal protein L18</fullName>
    </alternativeName>
</protein>
<sequence>MGIDINHKWDRKVRRTRPKSLDVYLSLLVKLYRFLYRRTKKKFNKIVMRRLFMSRTNHPPMSLNRVAHLMKLRGKDEKSVAVVIGTVTNDVRMMDVPKLNVCALRVTDKARQRILKNGGKIYTFDQLALLSPTGRNTVLMQGKRTAREVFKHFGRAPGVPHSNTRPYVQSKGRKFEKARGRRSSCGYKN</sequence>
<evidence type="ECO:0000250" key="1"/>
<evidence type="ECO:0000305" key="2"/>
<organism>
    <name type="scientific">Anopheles gambiae</name>
    <name type="common">African malaria mosquito</name>
    <dbReference type="NCBI Taxonomy" id="7165"/>
    <lineage>
        <taxon>Eukaryota</taxon>
        <taxon>Metazoa</taxon>
        <taxon>Ecdysozoa</taxon>
        <taxon>Arthropoda</taxon>
        <taxon>Hexapoda</taxon>
        <taxon>Insecta</taxon>
        <taxon>Pterygota</taxon>
        <taxon>Neoptera</taxon>
        <taxon>Endopterygota</taxon>
        <taxon>Diptera</taxon>
        <taxon>Nematocera</taxon>
        <taxon>Culicoidea</taxon>
        <taxon>Culicidae</taxon>
        <taxon>Anophelinae</taxon>
        <taxon>Anopheles</taxon>
    </lineage>
</organism>
<name>RL18_ANOGA</name>
<comment type="subcellular location">
    <subcellularLocation>
        <location evidence="1">Cytoplasm</location>
    </subcellularLocation>
</comment>
<comment type="similarity">
    <text evidence="2">Belongs to the eukaryotic ribosomal protein eL18 family.</text>
</comment>